<feature type="chain" id="PRO_0000059579" description="DNA ligase 4">
    <location>
        <begin position="1"/>
        <end position="912"/>
    </location>
</feature>
<feature type="domain" description="BRCT 1" evidence="4">
    <location>
        <begin position="659"/>
        <end position="748"/>
    </location>
</feature>
<feature type="domain" description="BRCT 2" evidence="4">
    <location>
        <begin position="809"/>
        <end position="912"/>
    </location>
</feature>
<feature type="region of interest" description="Required for catalytic activity" evidence="2">
    <location>
        <begin position="615"/>
        <end position="625"/>
    </location>
</feature>
<feature type="active site" description="N6-AMP-lysine intermediate" evidence="5">
    <location>
        <position position="278"/>
    </location>
</feature>
<feature type="binding site" evidence="2">
    <location>
        <position position="276"/>
    </location>
    <ligand>
        <name>ATP</name>
        <dbReference type="ChEBI" id="CHEBI:30616"/>
    </ligand>
</feature>
<feature type="binding site" evidence="2">
    <location>
        <position position="277"/>
    </location>
    <ligand>
        <name>ATP</name>
        <dbReference type="ChEBI" id="CHEBI:30616"/>
    </ligand>
</feature>
<feature type="binding site" evidence="2">
    <location>
        <position position="278"/>
    </location>
    <ligand>
        <name>ATP</name>
        <dbReference type="ChEBI" id="CHEBI:30616"/>
    </ligand>
</feature>
<feature type="binding site" evidence="2">
    <location>
        <position position="279"/>
    </location>
    <ligand>
        <name>ATP</name>
        <dbReference type="ChEBI" id="CHEBI:30616"/>
    </ligand>
</feature>
<feature type="binding site" evidence="1">
    <location>
        <position position="283"/>
    </location>
    <ligand>
        <name>ATP</name>
        <dbReference type="ChEBI" id="CHEBI:30616"/>
    </ligand>
</feature>
<feature type="binding site" evidence="1">
    <location>
        <position position="336"/>
    </location>
    <ligand>
        <name>ATP</name>
        <dbReference type="ChEBI" id="CHEBI:30616"/>
    </ligand>
</feature>
<feature type="binding site" evidence="3">
    <location>
        <position position="336"/>
    </location>
    <ligand>
        <name>Mg(2+)</name>
        <dbReference type="ChEBI" id="CHEBI:18420"/>
        <label>1</label>
    </ligand>
</feature>
<feature type="binding site" evidence="2">
    <location>
        <position position="350"/>
    </location>
    <ligand>
        <name>ATP</name>
        <dbReference type="ChEBI" id="CHEBI:30616"/>
    </ligand>
</feature>
<feature type="binding site" evidence="2">
    <location>
        <position position="372"/>
    </location>
    <ligand>
        <name>ATP</name>
        <dbReference type="ChEBI" id="CHEBI:30616"/>
    </ligand>
</feature>
<feature type="binding site" evidence="2">
    <location>
        <position position="432"/>
    </location>
    <ligand>
        <name>ATP</name>
        <dbReference type="ChEBI" id="CHEBI:30616"/>
    </ligand>
</feature>
<feature type="binding site" evidence="3">
    <location>
        <position position="432"/>
    </location>
    <ligand>
        <name>Mg(2+)</name>
        <dbReference type="ChEBI" id="CHEBI:18420"/>
        <label>2</label>
    </ligand>
</feature>
<feature type="binding site" evidence="1">
    <location>
        <position position="437"/>
    </location>
    <ligand>
        <name>ATP</name>
        <dbReference type="ChEBI" id="CHEBI:30616"/>
    </ligand>
</feature>
<feature type="binding site" evidence="1">
    <location>
        <position position="454"/>
    </location>
    <ligand>
        <name>ATP</name>
        <dbReference type="ChEBI" id="CHEBI:30616"/>
    </ligand>
</feature>
<feature type="binding site" evidence="2">
    <location>
        <position position="456"/>
    </location>
    <ligand>
        <name>ATP</name>
        <dbReference type="ChEBI" id="CHEBI:30616"/>
    </ligand>
</feature>
<feature type="sequence conflict" description="In Ref. 1; BAB68506." evidence="7" ref="1">
    <original>V</original>
    <variation>I</variation>
    <location>
        <position position="492"/>
    </location>
</feature>
<protein>
    <recommendedName>
        <fullName evidence="7">DNA ligase 4</fullName>
        <ecNumber evidence="5">6.5.1.1</ecNumber>
    </recommendedName>
    <alternativeName>
        <fullName evidence="6">DNA ligase IV</fullName>
    </alternativeName>
    <alternativeName>
        <fullName>Polydeoxyribonucleotide synthase [ATP] 4</fullName>
    </alternativeName>
</protein>
<keyword id="KW-0067">ATP-binding</keyword>
<keyword id="KW-0131">Cell cycle</keyword>
<keyword id="KW-0132">Cell division</keyword>
<keyword id="KW-0227">DNA damage</keyword>
<keyword id="KW-0233">DNA recombination</keyword>
<keyword id="KW-0234">DNA repair</keyword>
<keyword id="KW-0436">Ligase</keyword>
<keyword id="KW-0460">Magnesium</keyword>
<keyword id="KW-0479">Metal-binding</keyword>
<keyword id="KW-0547">Nucleotide-binding</keyword>
<keyword id="KW-0539">Nucleus</keyword>
<keyword id="KW-1185">Reference proteome</keyword>
<keyword id="KW-0677">Repeat</keyword>
<evidence type="ECO:0000250" key="1">
    <source>
        <dbReference type="UniProtKB" id="P18858"/>
    </source>
</evidence>
<evidence type="ECO:0000250" key="2">
    <source>
        <dbReference type="UniProtKB" id="P49917"/>
    </source>
</evidence>
<evidence type="ECO:0000255" key="3"/>
<evidence type="ECO:0000255" key="4">
    <source>
        <dbReference type="PROSITE-ProRule" id="PRU00033"/>
    </source>
</evidence>
<evidence type="ECO:0000255" key="5">
    <source>
        <dbReference type="PROSITE-ProRule" id="PRU10135"/>
    </source>
</evidence>
<evidence type="ECO:0000303" key="6">
    <source>
    </source>
</evidence>
<evidence type="ECO:0000305" key="7"/>
<reference key="1">
    <citation type="journal article" date="2001" name="Proc. Natl. Acad. Sci. U.S.A.">
        <title>DNA ligase IV-deficient cells are more resistant to ionizing radiation in the absence of Ku70: implications for DNA double-strand break repair.</title>
        <authorList>
            <person name="Adachi N."/>
            <person name="Ishino T."/>
            <person name="Ishii Y."/>
            <person name="Takeda S."/>
            <person name="Koyama H."/>
        </authorList>
    </citation>
    <scope>NUCLEOTIDE SEQUENCE [GENOMIC DNA]</scope>
</reference>
<reference key="2">
    <citation type="journal article" date="2005" name="Genome Biol.">
        <title>Full-length cDNAs from chicken bursal lymphocytes to facilitate gene function analysis.</title>
        <authorList>
            <person name="Caldwell R.B."/>
            <person name="Kierzek A.M."/>
            <person name="Arakawa H."/>
            <person name="Bezzubov Y."/>
            <person name="Zaim J."/>
            <person name="Fiedler P."/>
            <person name="Kutter S."/>
            <person name="Blagodatski A."/>
            <person name="Kostovska D."/>
            <person name="Koter M."/>
            <person name="Plachy J."/>
            <person name="Carninci P."/>
            <person name="Hayashizaki Y."/>
            <person name="Buerstedde J.-M."/>
        </authorList>
    </citation>
    <scope>NUCLEOTIDE SEQUENCE [LARGE SCALE MRNA]</scope>
    <source>
        <strain>CB</strain>
        <tissue>Bursa of Fabricius</tissue>
    </source>
</reference>
<comment type="function">
    <text evidence="2">DNA ligase involved in DNA non-homologous end joining (NHEJ); required for double-strand break (DSB) repair and V(D)J recombination. Catalyzes the NHEJ ligation step of the broken DNA during DSB repair by resealing the DNA breaks after the gap filling is completed. Joins single-strand breaks in a double-stranded polydeoxynucleotide in an ATP-dependent reaction. LIG4 is mechanistically flexible: it can ligate nicks as well as compatible DNA overhangs alone, while in the presence of XRCC4, it can ligate ends with 2-nucleotides (nt) microhomology and 1-nt gaps. Forms a subcomplex with XRCC4; the LIG4-XRCC4 subcomplex is responsible for the NHEJ ligation step and XRCC4 enhances the joining activity of LIG4.</text>
</comment>
<comment type="catalytic activity">
    <reaction evidence="2 5">
        <text>ATP + (deoxyribonucleotide)n-3'-hydroxyl + 5'-phospho-(deoxyribonucleotide)m = (deoxyribonucleotide)n+m + AMP + diphosphate.</text>
        <dbReference type="EC" id="6.5.1.1"/>
    </reaction>
</comment>
<comment type="cofactor">
    <cofactor evidence="2">
        <name>Mg(2+)</name>
        <dbReference type="ChEBI" id="CHEBI:18420"/>
    </cofactor>
</comment>
<comment type="subunit">
    <text evidence="2">Interacts with XRCC4; the LIG4-XRCC4 subcomplex has a 1:2 stoichiometry (By similarity). Component of the core long-range non-homologous end joining (NHEJ) complex (also named DNA-PK complex) composed of PRKDC, LIG4, XRCC4, XRCC6/Ku70, XRCC5/Ku86 and NHEJ1/XLF (By similarity). Additional component of the NHEJ complex includes PAXX (By similarity). Following autophosphorylation, PRKDC dissociates from DNA, leading to formation of the short-range NHEJ complex, composed of LIG4, XRCC4, XRCC6/Ku70, XRCC5/Ku86 and NHEJ1/XLF (By similarity).</text>
</comment>
<comment type="subcellular location">
    <subcellularLocation>
        <location evidence="2">Nucleus</location>
    </subcellularLocation>
</comment>
<comment type="similarity">
    <text evidence="7">Belongs to the ATP-dependent DNA ligase family.</text>
</comment>
<organism>
    <name type="scientific">Gallus gallus</name>
    <name type="common">Chicken</name>
    <dbReference type="NCBI Taxonomy" id="9031"/>
    <lineage>
        <taxon>Eukaryota</taxon>
        <taxon>Metazoa</taxon>
        <taxon>Chordata</taxon>
        <taxon>Craniata</taxon>
        <taxon>Vertebrata</taxon>
        <taxon>Euteleostomi</taxon>
        <taxon>Archelosauria</taxon>
        <taxon>Archosauria</taxon>
        <taxon>Dinosauria</taxon>
        <taxon>Saurischia</taxon>
        <taxon>Theropoda</taxon>
        <taxon>Coelurosauria</taxon>
        <taxon>Aves</taxon>
        <taxon>Neognathae</taxon>
        <taxon>Galloanserae</taxon>
        <taxon>Galliformes</taxon>
        <taxon>Phasianidae</taxon>
        <taxon>Phasianinae</taxon>
        <taxon>Gallus</taxon>
    </lineage>
</organism>
<sequence length="912" mass="104450">MASAPVLQPSPKRTVASHVPFADLCSTLERIQTCKSRPEKTKYFKDFLDSWRKFHSALHQKEKDVTDSFYPAMRLILPQLERERMAYGIKETMLAKLYIELLNLPKDGKDAVKLLNYRTPTGSRGDAGDFAMIAYFVLKPRSPKRGRLTVEQVNELLDAIANNNAAKNKGLVKKSLLQLITQSTALEQKWLIRMIIKDLKLGVSQQTIFSIFHPDAAELHNVTTDLEKVCRQLHDPSVSLSDVSIMLFSAFKPMLAAIADVQQIEKQMNNQVFYIETKLDGERMQMHKDGDVYKYFSRNGFDYTQQFGASPVDGSLTPFIHNVFKSDIQNCILDGEMMAYNPETQTFMQKGNKFDIKRMVEDSDLQTCFCVFDVLMINDQKLAHESLSKRYKILSNVFTPLTGRIHVVHKKSARTRKEVIDALNEAIDNREEGIMVKDPMSTYKPDKRGEGWLKIKPEYVNGLMDELDLLIVGGYWGKGSRGGMMSHFLCAVAETPAPNEKPTVFHSICRVGSGYTMKELYDLGLKLAKHWKPYNRKDPPCNILCGTEKPEMYIEPCNSVIVQIKAAEIVNSDMYKTDCTLRFPRIEKIREDKEWYECMTLDMLEHLRSRAEGKLASKHLYIDEYDEPQEKKRRTVPKVKKVIGIAEQFKAPDLSNVNKVSSMFEDVEFCVMTGMGRYSKSELESRIAECGGSVVQNPGPDTYCVIVGAENVRVKNIIASNKYDVVKAEWLLQCFQSKMLVPWQPAFMIHMSPETREHFAREYDCYGDSYTADTDVAQLKEVFSRVKDNKKMPLDLIAELEERYSWNSCKLCIFRGNTIYVDYYAIINKPSTKIHGTRLSIRALELRFYGAKVVPLLEEGVSHVVIGEDHSRVKEMKALRRMFGKKFKIVSELWVTESVKEGVPKNETQFLI</sequence>
<dbReference type="EC" id="6.5.1.1" evidence="5"/>
<dbReference type="EMBL" id="AB058600">
    <property type="protein sequence ID" value="BAB68506.1"/>
    <property type="molecule type" value="Genomic_DNA"/>
</dbReference>
<dbReference type="EMBL" id="AJ720061">
    <property type="protein sequence ID" value="CAG31720.1"/>
    <property type="molecule type" value="mRNA"/>
</dbReference>
<dbReference type="RefSeq" id="NP_001025987.1">
    <property type="nucleotide sequence ID" value="NM_001030816.1"/>
</dbReference>
<dbReference type="SMR" id="Q90YB1"/>
<dbReference type="FunCoup" id="Q90YB1">
    <property type="interactions" value="1844"/>
</dbReference>
<dbReference type="STRING" id="9031.ENSGALP00000027179"/>
<dbReference type="PaxDb" id="9031-ENSGALP00000027179"/>
<dbReference type="GeneID" id="418764"/>
<dbReference type="KEGG" id="gga:418764"/>
<dbReference type="CTD" id="3981"/>
<dbReference type="VEuPathDB" id="HostDB:geneid_418764"/>
<dbReference type="eggNOG" id="KOG0966">
    <property type="taxonomic scope" value="Eukaryota"/>
</dbReference>
<dbReference type="InParanoid" id="Q90YB1"/>
<dbReference type="OrthoDB" id="151490at2759"/>
<dbReference type="PhylomeDB" id="Q90YB1"/>
<dbReference type="Reactome" id="R-GGA-353423">
    <property type="pathway name" value="Non-homologous end joining (NHEJ)"/>
</dbReference>
<dbReference type="PRO" id="PR:Q90YB1"/>
<dbReference type="Proteomes" id="UP000000539">
    <property type="component" value="Unassembled WGS sequence"/>
</dbReference>
<dbReference type="GO" id="GO:0032807">
    <property type="term" value="C:DNA ligase IV complex"/>
    <property type="evidence" value="ECO:0000318"/>
    <property type="project" value="GO_Central"/>
</dbReference>
<dbReference type="GO" id="GO:0005958">
    <property type="term" value="C:DNA-dependent protein kinase-DNA ligase 4 complex"/>
    <property type="evidence" value="ECO:0000250"/>
    <property type="project" value="UniProtKB"/>
</dbReference>
<dbReference type="GO" id="GO:0070419">
    <property type="term" value="C:nonhomologous end joining complex"/>
    <property type="evidence" value="ECO:0000250"/>
    <property type="project" value="UniProtKB"/>
</dbReference>
<dbReference type="GO" id="GO:0005654">
    <property type="term" value="C:nucleoplasm"/>
    <property type="evidence" value="ECO:0000304"/>
    <property type="project" value="Reactome"/>
</dbReference>
<dbReference type="GO" id="GO:0005524">
    <property type="term" value="F:ATP binding"/>
    <property type="evidence" value="ECO:0000318"/>
    <property type="project" value="GO_Central"/>
</dbReference>
<dbReference type="GO" id="GO:0003677">
    <property type="term" value="F:DNA binding"/>
    <property type="evidence" value="ECO:0000318"/>
    <property type="project" value="GO_Central"/>
</dbReference>
<dbReference type="GO" id="GO:0003910">
    <property type="term" value="F:DNA ligase (ATP) activity"/>
    <property type="evidence" value="ECO:0000318"/>
    <property type="project" value="GO_Central"/>
</dbReference>
<dbReference type="GO" id="GO:0046872">
    <property type="term" value="F:metal ion binding"/>
    <property type="evidence" value="ECO:0007669"/>
    <property type="project" value="UniProtKB-KW"/>
</dbReference>
<dbReference type="GO" id="GO:0051301">
    <property type="term" value="P:cell division"/>
    <property type="evidence" value="ECO:0007669"/>
    <property type="project" value="UniProtKB-KW"/>
</dbReference>
<dbReference type="GO" id="GO:0071897">
    <property type="term" value="P:DNA biosynthetic process"/>
    <property type="evidence" value="ECO:0007669"/>
    <property type="project" value="InterPro"/>
</dbReference>
<dbReference type="GO" id="GO:0006303">
    <property type="term" value="P:double-strand break repair via nonhomologous end joining"/>
    <property type="evidence" value="ECO:0000318"/>
    <property type="project" value="GO_Central"/>
</dbReference>
<dbReference type="GO" id="GO:0033152">
    <property type="term" value="P:immunoglobulin V(D)J recombination"/>
    <property type="evidence" value="ECO:0000318"/>
    <property type="project" value="GO_Central"/>
</dbReference>
<dbReference type="GO" id="GO:0006297">
    <property type="term" value="P:nucleotide-excision repair, DNA gap filling"/>
    <property type="evidence" value="ECO:0000318"/>
    <property type="project" value="GO_Central"/>
</dbReference>
<dbReference type="CDD" id="cd07903">
    <property type="entry name" value="Adenylation_DNA_ligase_IV"/>
    <property type="match status" value="1"/>
</dbReference>
<dbReference type="CDD" id="cd17722">
    <property type="entry name" value="BRCT_DNA_ligase_IV_rpt1"/>
    <property type="match status" value="1"/>
</dbReference>
<dbReference type="CDD" id="cd17717">
    <property type="entry name" value="BRCT_DNA_ligase_IV_rpt2"/>
    <property type="match status" value="1"/>
</dbReference>
<dbReference type="CDD" id="cd07968">
    <property type="entry name" value="OBF_DNA_ligase_IV"/>
    <property type="match status" value="1"/>
</dbReference>
<dbReference type="FunFam" id="1.10.3260.10:FF:000003">
    <property type="entry name" value="DNA ligase"/>
    <property type="match status" value="1"/>
</dbReference>
<dbReference type="FunFam" id="2.40.50.140:FF:000150">
    <property type="entry name" value="DNA ligase"/>
    <property type="match status" value="1"/>
</dbReference>
<dbReference type="FunFam" id="3.30.470.30:FF:000008">
    <property type="entry name" value="DNA ligase"/>
    <property type="match status" value="1"/>
</dbReference>
<dbReference type="FunFam" id="3.40.50.10190:FF:000027">
    <property type="entry name" value="DNA ligase"/>
    <property type="match status" value="1"/>
</dbReference>
<dbReference type="FunFam" id="3.40.50.10190:FF:000044">
    <property type="entry name" value="DNA ligase"/>
    <property type="match status" value="1"/>
</dbReference>
<dbReference type="Gene3D" id="6.10.250.520">
    <property type="match status" value="1"/>
</dbReference>
<dbReference type="Gene3D" id="3.40.50.10190">
    <property type="entry name" value="BRCT domain"/>
    <property type="match status" value="2"/>
</dbReference>
<dbReference type="Gene3D" id="1.10.3260.10">
    <property type="entry name" value="DNA ligase, ATP-dependent, N-terminal domain"/>
    <property type="match status" value="1"/>
</dbReference>
<dbReference type="Gene3D" id="3.30.470.30">
    <property type="entry name" value="DNA ligase/mRNA capping enzyme"/>
    <property type="match status" value="1"/>
</dbReference>
<dbReference type="Gene3D" id="2.40.50.140">
    <property type="entry name" value="Nucleic acid-binding proteins"/>
    <property type="match status" value="1"/>
</dbReference>
<dbReference type="InterPro" id="IPR044125">
    <property type="entry name" value="Adenylation_DNA_ligase_IV"/>
</dbReference>
<dbReference type="InterPro" id="IPR001357">
    <property type="entry name" value="BRCT_dom"/>
</dbReference>
<dbReference type="InterPro" id="IPR036420">
    <property type="entry name" value="BRCT_dom_sf"/>
</dbReference>
<dbReference type="InterPro" id="IPR000977">
    <property type="entry name" value="DNA_ligase_ATP-dep"/>
</dbReference>
<dbReference type="InterPro" id="IPR012309">
    <property type="entry name" value="DNA_ligase_ATP-dep_C"/>
</dbReference>
<dbReference type="InterPro" id="IPR012310">
    <property type="entry name" value="DNA_ligase_ATP-dep_cent"/>
</dbReference>
<dbReference type="InterPro" id="IPR016059">
    <property type="entry name" value="DNA_ligase_ATP-dep_CS"/>
</dbReference>
<dbReference type="InterPro" id="IPR012308">
    <property type="entry name" value="DNA_ligase_ATP-dep_N"/>
</dbReference>
<dbReference type="InterPro" id="IPR021536">
    <property type="entry name" value="DNA_ligase_IV_dom"/>
</dbReference>
<dbReference type="InterPro" id="IPR036599">
    <property type="entry name" value="DNA_ligase_N_sf"/>
</dbReference>
<dbReference type="InterPro" id="IPR029710">
    <property type="entry name" value="LIG4"/>
</dbReference>
<dbReference type="InterPro" id="IPR012340">
    <property type="entry name" value="NA-bd_OB-fold"/>
</dbReference>
<dbReference type="NCBIfam" id="TIGR00574">
    <property type="entry name" value="dnl1"/>
    <property type="match status" value="1"/>
</dbReference>
<dbReference type="PANTHER" id="PTHR45997">
    <property type="entry name" value="DNA LIGASE 4"/>
    <property type="match status" value="1"/>
</dbReference>
<dbReference type="PANTHER" id="PTHR45997:SF1">
    <property type="entry name" value="DNA LIGASE 4"/>
    <property type="match status" value="1"/>
</dbReference>
<dbReference type="Pfam" id="PF00533">
    <property type="entry name" value="BRCT"/>
    <property type="match status" value="1"/>
</dbReference>
<dbReference type="Pfam" id="PF04679">
    <property type="entry name" value="DNA_ligase_A_C"/>
    <property type="match status" value="1"/>
</dbReference>
<dbReference type="Pfam" id="PF01068">
    <property type="entry name" value="DNA_ligase_A_M"/>
    <property type="match status" value="1"/>
</dbReference>
<dbReference type="Pfam" id="PF04675">
    <property type="entry name" value="DNA_ligase_A_N"/>
    <property type="match status" value="1"/>
</dbReference>
<dbReference type="Pfam" id="PF11411">
    <property type="entry name" value="DNA_ligase_IV"/>
    <property type="match status" value="1"/>
</dbReference>
<dbReference type="SMART" id="SM00292">
    <property type="entry name" value="BRCT"/>
    <property type="match status" value="2"/>
</dbReference>
<dbReference type="SUPFAM" id="SSF117018">
    <property type="entry name" value="ATP-dependent DNA ligase DNA-binding domain"/>
    <property type="match status" value="1"/>
</dbReference>
<dbReference type="SUPFAM" id="SSF52113">
    <property type="entry name" value="BRCT domain"/>
    <property type="match status" value="2"/>
</dbReference>
<dbReference type="SUPFAM" id="SSF56091">
    <property type="entry name" value="DNA ligase/mRNA capping enzyme, catalytic domain"/>
    <property type="match status" value="1"/>
</dbReference>
<dbReference type="SUPFAM" id="SSF50249">
    <property type="entry name" value="Nucleic acid-binding proteins"/>
    <property type="match status" value="1"/>
</dbReference>
<dbReference type="PROSITE" id="PS50172">
    <property type="entry name" value="BRCT"/>
    <property type="match status" value="2"/>
</dbReference>
<dbReference type="PROSITE" id="PS00697">
    <property type="entry name" value="DNA_LIGASE_A1"/>
    <property type="match status" value="1"/>
</dbReference>
<dbReference type="PROSITE" id="PS00333">
    <property type="entry name" value="DNA_LIGASE_A2"/>
    <property type="match status" value="1"/>
</dbReference>
<dbReference type="PROSITE" id="PS50160">
    <property type="entry name" value="DNA_LIGASE_A3"/>
    <property type="match status" value="1"/>
</dbReference>
<gene>
    <name evidence="6" type="primary">LIG4</name>
    <name evidence="6" type="ORF">RCJMB04_10b2</name>
</gene>
<name>DNLI4_CHICK</name>
<proteinExistence type="evidence at transcript level"/>
<accession>Q90YB1</accession>
<accession>Q5ZKM3</accession>